<proteinExistence type="inferred from homology"/>
<gene>
    <name type="primary">ACTB</name>
</gene>
<keyword id="KW-0007">Acetylation</keyword>
<keyword id="KW-0067">ATP-binding</keyword>
<keyword id="KW-0963">Cytoplasm</keyword>
<keyword id="KW-0206">Cytoskeleton</keyword>
<keyword id="KW-0378">Hydrolase</keyword>
<keyword id="KW-0488">Methylation</keyword>
<keyword id="KW-0547">Nucleotide-binding</keyword>
<keyword id="KW-0539">Nucleus</keyword>
<keyword id="KW-0558">Oxidation</keyword>
<keyword id="KW-0832">Ubl conjugation</keyword>
<evidence type="ECO:0000250" key="1">
    <source>
        <dbReference type="UniProtKB" id="O18840"/>
    </source>
</evidence>
<evidence type="ECO:0000250" key="2">
    <source>
        <dbReference type="UniProtKB" id="P60709"/>
    </source>
</evidence>
<evidence type="ECO:0000250" key="3">
    <source>
        <dbReference type="UniProtKB" id="P60710"/>
    </source>
</evidence>
<evidence type="ECO:0000250" key="4">
    <source>
        <dbReference type="UniProtKB" id="P68137"/>
    </source>
</evidence>
<evidence type="ECO:0000250" key="5">
    <source>
        <dbReference type="UniProtKB" id="Q6QAQ1"/>
    </source>
</evidence>
<evidence type="ECO:0000305" key="6"/>
<name>ACTB_CRIGR</name>
<organism>
    <name type="scientific">Cricetulus griseus</name>
    <name type="common">Chinese hamster</name>
    <name type="synonym">Cricetulus barabensis griseus</name>
    <dbReference type="NCBI Taxonomy" id="10029"/>
    <lineage>
        <taxon>Eukaryota</taxon>
        <taxon>Metazoa</taxon>
        <taxon>Chordata</taxon>
        <taxon>Craniata</taxon>
        <taxon>Vertebrata</taxon>
        <taxon>Euteleostomi</taxon>
        <taxon>Mammalia</taxon>
        <taxon>Eutheria</taxon>
        <taxon>Euarchontoglires</taxon>
        <taxon>Glires</taxon>
        <taxon>Rodentia</taxon>
        <taxon>Myomorpha</taxon>
        <taxon>Muroidea</taxon>
        <taxon>Cricetidae</taxon>
        <taxon>Cricetinae</taxon>
        <taxon>Cricetulus</taxon>
    </lineage>
</organism>
<dbReference type="EC" id="3.6.4.-" evidence="4"/>
<dbReference type="EMBL" id="U20114">
    <property type="protein sequence ID" value="AAA64871.1"/>
    <property type="molecule type" value="Genomic_DNA"/>
</dbReference>
<dbReference type="RefSeq" id="NP_001231504.1">
    <property type="nucleotide sequence ID" value="NM_001244575.1"/>
</dbReference>
<dbReference type="SMR" id="P48975"/>
<dbReference type="PaxDb" id="10029-NP_001231504.1"/>
<dbReference type="GeneID" id="100689477"/>
<dbReference type="KEGG" id="cge:100689477"/>
<dbReference type="CTD" id="60"/>
<dbReference type="eggNOG" id="KOG0676">
    <property type="taxonomic scope" value="Eukaryota"/>
</dbReference>
<dbReference type="OrthoDB" id="9546537at2759"/>
<dbReference type="Proteomes" id="UP000694386">
    <property type="component" value="Unplaced"/>
</dbReference>
<dbReference type="Proteomes" id="UP001108280">
    <property type="component" value="Chromosome 4"/>
</dbReference>
<dbReference type="GO" id="GO:0015629">
    <property type="term" value="C:actin cytoskeleton"/>
    <property type="evidence" value="ECO:0000250"/>
    <property type="project" value="UniProtKB"/>
</dbReference>
<dbReference type="GO" id="GO:0005856">
    <property type="term" value="C:cytoskeleton"/>
    <property type="evidence" value="ECO:0000250"/>
    <property type="project" value="AgBase"/>
</dbReference>
<dbReference type="GO" id="GO:0097433">
    <property type="term" value="C:dense body"/>
    <property type="evidence" value="ECO:0000250"/>
    <property type="project" value="AgBase"/>
</dbReference>
<dbReference type="GO" id="GO:0005925">
    <property type="term" value="C:focal adhesion"/>
    <property type="evidence" value="ECO:0000250"/>
    <property type="project" value="AgBase"/>
</dbReference>
<dbReference type="GO" id="GO:0005634">
    <property type="term" value="C:nucleus"/>
    <property type="evidence" value="ECO:0000250"/>
    <property type="project" value="UniProtKB"/>
</dbReference>
<dbReference type="GO" id="GO:0005886">
    <property type="term" value="C:plasma membrane"/>
    <property type="evidence" value="ECO:0000250"/>
    <property type="project" value="AgBase"/>
</dbReference>
<dbReference type="GO" id="GO:0032991">
    <property type="term" value="C:protein-containing complex"/>
    <property type="evidence" value="ECO:0000250"/>
    <property type="project" value="UniProtKB"/>
</dbReference>
<dbReference type="GO" id="GO:0005524">
    <property type="term" value="F:ATP binding"/>
    <property type="evidence" value="ECO:0007669"/>
    <property type="project" value="UniProtKB-KW"/>
</dbReference>
<dbReference type="GO" id="GO:0016787">
    <property type="term" value="F:hydrolase activity"/>
    <property type="evidence" value="ECO:0007669"/>
    <property type="project" value="UniProtKB-KW"/>
</dbReference>
<dbReference type="CDD" id="cd10224">
    <property type="entry name" value="ASKHA_NBD_actin"/>
    <property type="match status" value="1"/>
</dbReference>
<dbReference type="FunFam" id="2.30.36.70:FF:000001">
    <property type="entry name" value="Actin, alpha skeletal muscle"/>
    <property type="match status" value="1"/>
</dbReference>
<dbReference type="FunFam" id="3.30.420.40:FF:000131">
    <property type="entry name" value="Actin, alpha skeletal muscle"/>
    <property type="match status" value="1"/>
</dbReference>
<dbReference type="FunFam" id="3.30.420.40:FF:000291">
    <property type="entry name" value="Actin, alpha skeletal muscle"/>
    <property type="match status" value="1"/>
</dbReference>
<dbReference type="FunFam" id="3.90.640.10:FF:000047">
    <property type="entry name" value="Actin, alpha skeletal muscle"/>
    <property type="match status" value="1"/>
</dbReference>
<dbReference type="FunFam" id="3.30.420.40:FF:000058">
    <property type="entry name" value="Putative actin-related protein 5"/>
    <property type="match status" value="1"/>
</dbReference>
<dbReference type="Gene3D" id="3.30.420.40">
    <property type="match status" value="2"/>
</dbReference>
<dbReference type="Gene3D" id="3.90.640.10">
    <property type="entry name" value="Actin, Chain A, domain 4"/>
    <property type="match status" value="1"/>
</dbReference>
<dbReference type="InterPro" id="IPR004000">
    <property type="entry name" value="Actin"/>
</dbReference>
<dbReference type="InterPro" id="IPR020902">
    <property type="entry name" value="Actin/actin-like_CS"/>
</dbReference>
<dbReference type="InterPro" id="IPR004001">
    <property type="entry name" value="Actin_CS"/>
</dbReference>
<dbReference type="InterPro" id="IPR043129">
    <property type="entry name" value="ATPase_NBD"/>
</dbReference>
<dbReference type="PANTHER" id="PTHR11937">
    <property type="entry name" value="ACTIN"/>
    <property type="match status" value="1"/>
</dbReference>
<dbReference type="Pfam" id="PF00022">
    <property type="entry name" value="Actin"/>
    <property type="match status" value="1"/>
</dbReference>
<dbReference type="PRINTS" id="PR00190">
    <property type="entry name" value="ACTIN"/>
</dbReference>
<dbReference type="SMART" id="SM00268">
    <property type="entry name" value="ACTIN"/>
    <property type="match status" value="1"/>
</dbReference>
<dbReference type="SUPFAM" id="SSF53067">
    <property type="entry name" value="Actin-like ATPase domain"/>
    <property type="match status" value="2"/>
</dbReference>
<dbReference type="PROSITE" id="PS00406">
    <property type="entry name" value="ACTINS_1"/>
    <property type="match status" value="1"/>
</dbReference>
<dbReference type="PROSITE" id="PS00432">
    <property type="entry name" value="ACTINS_2"/>
    <property type="match status" value="1"/>
</dbReference>
<dbReference type="PROSITE" id="PS01132">
    <property type="entry name" value="ACTINS_ACT_LIKE"/>
    <property type="match status" value="1"/>
</dbReference>
<protein>
    <recommendedName>
        <fullName>Actin, cytoplasmic 1</fullName>
        <ecNumber evidence="4">3.6.4.-</ecNumber>
    </recommendedName>
    <alternativeName>
        <fullName>Beta-actin</fullName>
    </alternativeName>
    <component>
        <recommendedName>
            <fullName>Actin, cytoplasmic 1, N-terminally processed</fullName>
        </recommendedName>
    </component>
</protein>
<sequence length="375" mass="41738">MDDDIAALVVDNGSGMCKAGFAGDDAPRAVFPSIVGRPRHQGVMVGMGQKDSYVGDEAQSKRGILTLKYPIEHGIVTNWDDMEKIWHHTFYNELRVAPEEHPVLLTEAPLNPKANREKMTQIMFETFNTPAMYVAIQAVLSLYASGRTTGIVMDSGDGVTHTVPIYEGYALPHAILRLDLAGRDLTDYLMKILTERGYSFTTTAEREIVRDIKEKLCYVALDFEQEMATAASSSSLEKSYELPDGQVITIGNERFRCPEALFQPSFLGMESCGIHETTFNSIMKCDVDIRKDLYANTVLSGGTTMYPGIADRMQKEITALAPSTMKIKIIAPPERKYSVWIGGSILASLSTFQEMWISKQEYDESGPSIVHRKCF</sequence>
<comment type="function">
    <text evidence="2 5">Actin is a highly conserved protein that polymerizes to produce filaments that form cross-linked networks in the cytoplasm of cells (By similarity). Actin exists in both monomeric (G-actin) and polymeric (F-actin) forms, both forms playing key functions, such as cell motility and contraction (By similarity). In addition to their role in the cytoplasmic cytoskeleton, G- and F-actin also localize in the nucleus, and regulate gene transcription and motility and repair of damaged DNA (By similarity). Plays a role in the assembly of the gamma-tubulin ring complex (gTuRC), which regulates the minus-end nucleation of alpha-beta tubulin heterodimers that grow into microtubule protafilaments (By similarity). Part of the ACTR1A/ACTB filament around which the dynactin complex is built (By similarity). The dynactin multiprotein complex activates the molecular motor dynein for ultra-processive transport along microtubules (By similarity).</text>
</comment>
<comment type="catalytic activity">
    <reaction evidence="4">
        <text>ATP + H2O = ADP + phosphate + H(+)</text>
        <dbReference type="Rhea" id="RHEA:13065"/>
        <dbReference type="ChEBI" id="CHEBI:15377"/>
        <dbReference type="ChEBI" id="CHEBI:15378"/>
        <dbReference type="ChEBI" id="CHEBI:30616"/>
        <dbReference type="ChEBI" id="CHEBI:43474"/>
        <dbReference type="ChEBI" id="CHEBI:456216"/>
    </reaction>
</comment>
<comment type="subunit">
    <text evidence="1 2 3 5">Polymerization of globular actin (G-actin) leads to a structural filament (F-actin) in the form of a two-stranded helix (By similarity). Each actin can bind to 4 others (By similarity). Identified in a IGF2BP1-dependent mRNP granule complex containing untranslated mRNAs (By similarity). Component of the BAF complex, which includes at least actin (ACTB), ARID1A, ARID1B/BAF250, SMARCA2, SMARCA4/BRG1, ACTL6A/BAF53, ACTL6B/BAF53B, SMARCE1/BAF57 SMARCC1/BAF155, SMARCC2/BAF170, SMARCB1/SNF5/INI1, and one or more of SMARCD1/BAF60A, SMARCD2/BAF60B, or SMARCD3/BAF60C (By similarity). In muscle cells, the BAF complex also contains DPF3 (By similarity). Found in a complex with XPO6, Ran, ACTB and PFN1 (By similarity). Interacts with PFN1 (By similarity). Interacts with XPO6 and EMD (By similarity). Interacts with ERBB2 (By similarity). Interacts with GCSAM (By similarity). Interacts with TBC1D21 (By similarity). Interacts with CPNE1 (via VWFA domain) and CPNE4 (via VWFA domain) (By similarity). Interacts with DHX9 (via C-terminus); this interaction is direct and mediates the attachment to nuclear ribonucleoprotein complexes (By similarity). Interacts with FAM107A (By similarity). Associates with the gamma-tubulin ring complex (gTuRC) consisting of TUBGCP2, TUBGCP3, TUBGCP4, TUBGCP5 and TUBGCP6 and gamma-tubulin TUBG1 or TUBG2; within the complex, interacts with TUBGCP3 and TUBGCP6 to form a luminal bridge with MZT1 that stabilizes the initial structure during complex assembly (By similarity). Part of the ACTR1A/ACTB filament around which the dynactin complex is built (By similarity). The filament contains 8 copies of ACTR1A and 1 ACTB (By similarity). Interacts with TPRN which forms ring-like structures in the stereocilium taper region; the interaction may stabilize stereocilia in inner ear hair cells (By similarity). Interacts with AMOTL2 (via N-terminus), the interaction facilitates binding of cell junction complexes to actin fibers in endothelial cells (By similarity).</text>
</comment>
<comment type="subcellular location">
    <subcellularLocation>
        <location evidence="2">Cytoplasm</location>
        <location evidence="2">Cytoskeleton</location>
    </subcellularLocation>
    <subcellularLocation>
        <location evidence="2">Nucleus</location>
    </subcellularLocation>
    <text evidence="2">Localized in cytoplasmic mRNP granules containing untranslated mRNAs.</text>
</comment>
<comment type="PTM">
    <molecule>Actin, cytoplasmic 1</molecule>
    <text evidence="2">N-terminal cleavage of acetylated methionine of immature cytoplasmic actin by ACTMAP.</text>
</comment>
<comment type="PTM">
    <text evidence="2">ISGylated.</text>
</comment>
<comment type="PTM">
    <text evidence="3">Oxidation of Met-44 and Met-47 by MICALs (MICAL1, MICAL2 or MICAL3) to form methionine sulfoxide promotes actin filament depolymerization. MICAL1 and MICAL2 produce the (R)-S-oxide form. The (R)-S-oxide form is reverted by MSRB1 and MSRB2, which promote actin repolymerization.</text>
</comment>
<comment type="PTM">
    <text evidence="2">Monomethylation at Lys-84 (K84me1) regulates actin-myosin interaction and actomyosin-dependent processes. Demethylation by ALKBH4 is required for maintaining actomyosin dynamics supporting normal cleavage furrow ingression during cytokinesis and cell migration.</text>
</comment>
<comment type="PTM">
    <molecule>Actin, cytoplasmic 1, N-terminally processed</molecule>
    <text evidence="2">N-terminal acetylation by NAA80 affects actin filament depolymerization and elongation, including elongation driven by formins. In contrast, filament nucleation by the Arp2/3 complex is not affected.</text>
</comment>
<comment type="PTM">
    <text evidence="2 3">Methylated at His-73 by SETD3 (By similarity). Methylation at His-73 is required for smooth muscle contraction of the laboring uterus during delivery (By similarity).</text>
</comment>
<comment type="miscellaneous">
    <text evidence="2">In vertebrates 3 main groups of actin isoforms, alpha, beta and gamma have been identified. The alpha actins are found in muscle tissues and are a major constituent of the contractile apparatus. The beta and gamma actins coexist in most cell types as components of the cytoskeleton and as mediators of internal cell motility.</text>
</comment>
<comment type="similarity">
    <text evidence="6">Belongs to the actin family.</text>
</comment>
<accession>P48975</accession>
<reference key="1">
    <citation type="submission" date="1995-01" db="EMBL/GenBank/DDBJ databases">
        <title>Isolation and characterization of the beta-actin gene from Chinese hamster.</title>
        <authorList>
            <person name="Staehlbom P.-A."/>
            <person name="Franzen S.A."/>
        </authorList>
    </citation>
    <scope>NUCLEOTIDE SEQUENCE [GENOMIC DNA]</scope>
</reference>
<feature type="chain" id="PRO_0000000767" description="Actin, cytoplasmic 1">
    <location>
        <begin position="1"/>
        <end position="375"/>
    </location>
</feature>
<feature type="initiator methionine" description="Removed; alternate" evidence="2">
    <location>
        <position position="1"/>
    </location>
</feature>
<feature type="chain" id="PRO_0000367071" description="Actin, cytoplasmic 1, N-terminally processed">
    <location>
        <begin position="2"/>
        <end position="375"/>
    </location>
</feature>
<feature type="modified residue" description="N-acetylmethionine" evidence="2">
    <location>
        <position position="1"/>
    </location>
</feature>
<feature type="modified residue" description="N-acetylaspartate; in Actin, cytoplasmic 1, N-terminally processed" evidence="2">
    <location>
        <position position="2"/>
    </location>
</feature>
<feature type="modified residue" description="Methionine (R)-sulfoxide" evidence="3">
    <location>
        <position position="44"/>
    </location>
</feature>
<feature type="modified residue" description="Methionine (R)-sulfoxide" evidence="3">
    <location>
        <position position="47"/>
    </location>
</feature>
<feature type="modified residue" description="Tele-methylhistidine" evidence="3">
    <location>
        <position position="73"/>
    </location>
</feature>
<feature type="modified residue" description="N6-methyllysine" evidence="2">
    <location>
        <position position="84"/>
    </location>
</feature>